<gene>
    <name evidence="1" type="primary">floA</name>
    <name type="ordered locus">Exig_0818</name>
</gene>
<feature type="chain" id="PRO_1000199714" description="Flotillin-like protein FloA">
    <location>
        <begin position="1"/>
        <end position="327"/>
    </location>
</feature>
<feature type="transmembrane region" description="Helical" evidence="1">
    <location>
        <begin position="8"/>
        <end position="28"/>
    </location>
</feature>
<feature type="transmembrane region" description="Helical" evidence="1">
    <location>
        <begin position="29"/>
        <end position="49"/>
    </location>
</feature>
<accession>B1YL66</accession>
<comment type="function">
    <text evidence="1">Found in functional membrane microdomains (FMM) that may be equivalent to eukaryotic membrane rafts. FMMs are highly dynamic and increase in number as cells age. Flotillins are thought to be important factors in membrane fluidity.</text>
</comment>
<comment type="subunit">
    <text evidence="1">Homooligomerizes.</text>
</comment>
<comment type="subcellular location">
    <subcellularLocation>
        <location evidence="1">Cell membrane</location>
        <topology evidence="1">Multi-pass membrane protein</topology>
    </subcellularLocation>
    <subcellularLocation>
        <location evidence="1">Membrane raft</location>
        <topology evidence="1">Multi-pass membrane protein</topology>
    </subcellularLocation>
</comment>
<comment type="similarity">
    <text evidence="1">Belongs to the flotillin-like FloA family.</text>
</comment>
<proteinExistence type="inferred from homology"/>
<sequence length="327" mass="34954">MTPELLTVLLITGGILIFLAIFFTLVPIPLWISSLAAGVRVSIFTLVGMRLRRVTPSKIVNPLIKAVKAGINLNTNQLESHYLAGGNVDRVVNALIAAHRANIELSFERAAAIDLAGRNVLEAVQMSVNPKVIETPFIAGVAMNGIEVKAKARITVRANIDRLVGGAGEETVIARVGEGVISTIGSCQDQKEVLENPEMISRTVLAKGLDSGTAFEILSIDIADVDIGKNIGAVLQTDQAEADKNIAQAKAEERRAMAIASEQEMKSRVEEMRAKVVAAEAEVPLAIAEALRDGNFSVMDYANYLNVTADTKMRQAIGGQSSPNDTQ</sequence>
<reference key="1">
    <citation type="submission" date="2008-04" db="EMBL/GenBank/DDBJ databases">
        <title>Complete sequence of chromosome of Exiguobacterium sibiricum 255-15.</title>
        <authorList>
            <consortium name="US DOE Joint Genome Institute"/>
            <person name="Copeland A."/>
            <person name="Lucas S."/>
            <person name="Lapidus A."/>
            <person name="Glavina del Rio T."/>
            <person name="Dalin E."/>
            <person name="Tice H."/>
            <person name="Bruce D."/>
            <person name="Goodwin L."/>
            <person name="Pitluck S."/>
            <person name="Kiss H."/>
            <person name="Chertkov O."/>
            <person name="Monk C."/>
            <person name="Brettin T."/>
            <person name="Detter J.C."/>
            <person name="Han C."/>
            <person name="Kuske C.R."/>
            <person name="Schmutz J."/>
            <person name="Larimer F."/>
            <person name="Land M."/>
            <person name="Hauser L."/>
            <person name="Kyrpides N."/>
            <person name="Mikhailova N."/>
            <person name="Vishnivetskaya T."/>
            <person name="Rodrigues D.F."/>
            <person name="Gilichinsky D."/>
            <person name="Tiedje J."/>
            <person name="Richardson P."/>
        </authorList>
    </citation>
    <scope>NUCLEOTIDE SEQUENCE [LARGE SCALE GENOMIC DNA]</scope>
    <source>
        <strain>DSM 17290 / CCUG 55495 / CIP 109462 / JCM 13490 / 255-15</strain>
    </source>
</reference>
<keyword id="KW-1003">Cell membrane</keyword>
<keyword id="KW-0472">Membrane</keyword>
<keyword id="KW-1185">Reference proteome</keyword>
<keyword id="KW-0812">Transmembrane</keyword>
<keyword id="KW-1133">Transmembrane helix</keyword>
<evidence type="ECO:0000255" key="1">
    <source>
        <dbReference type="HAMAP-Rule" id="MF_01562"/>
    </source>
</evidence>
<name>FLOA_EXIS2</name>
<protein>
    <recommendedName>
        <fullName evidence="1">Flotillin-like protein FloA</fullName>
    </recommendedName>
</protein>
<dbReference type="EMBL" id="CP001022">
    <property type="protein sequence ID" value="ACB60298.1"/>
    <property type="molecule type" value="Genomic_DNA"/>
</dbReference>
<dbReference type="RefSeq" id="WP_012369722.1">
    <property type="nucleotide sequence ID" value="NC_010556.1"/>
</dbReference>
<dbReference type="SMR" id="B1YL66"/>
<dbReference type="STRING" id="262543.Exig_0818"/>
<dbReference type="KEGG" id="esi:Exig_0818"/>
<dbReference type="eggNOG" id="COG4864">
    <property type="taxonomic scope" value="Bacteria"/>
</dbReference>
<dbReference type="HOGENOM" id="CLU_836378_0_0_9"/>
<dbReference type="OrthoDB" id="9808365at2"/>
<dbReference type="Proteomes" id="UP000001681">
    <property type="component" value="Chromosome"/>
</dbReference>
<dbReference type="GO" id="GO:0045121">
    <property type="term" value="C:membrane raft"/>
    <property type="evidence" value="ECO:0007669"/>
    <property type="project" value="UniProtKB-SubCell"/>
</dbReference>
<dbReference type="GO" id="GO:0005886">
    <property type="term" value="C:plasma membrane"/>
    <property type="evidence" value="ECO:0007669"/>
    <property type="project" value="UniProtKB-SubCell"/>
</dbReference>
<dbReference type="HAMAP" id="MF_01562">
    <property type="entry name" value="FloA"/>
    <property type="match status" value="1"/>
</dbReference>
<dbReference type="InterPro" id="IPR022853">
    <property type="entry name" value="FloA"/>
</dbReference>
<dbReference type="NCBIfam" id="NF010186">
    <property type="entry name" value="PRK13665.1"/>
    <property type="match status" value="1"/>
</dbReference>
<dbReference type="Pfam" id="PF12127">
    <property type="entry name" value="FloA"/>
    <property type="match status" value="1"/>
</dbReference>
<organism>
    <name type="scientific">Exiguobacterium sibiricum (strain DSM 17290 / CCUG 55495 / CIP 109462 / JCM 13490 / 255-15)</name>
    <dbReference type="NCBI Taxonomy" id="262543"/>
    <lineage>
        <taxon>Bacteria</taxon>
        <taxon>Bacillati</taxon>
        <taxon>Bacillota</taxon>
        <taxon>Bacilli</taxon>
        <taxon>Bacillales</taxon>
        <taxon>Bacillales Family XII. Incertae Sedis</taxon>
        <taxon>Exiguobacterium</taxon>
    </lineage>
</organism>